<evidence type="ECO:0000250" key="1"/>
<evidence type="ECO:0000256" key="2">
    <source>
        <dbReference type="SAM" id="MobiDB-lite"/>
    </source>
</evidence>
<evidence type="ECO:0000305" key="3"/>
<accession>Q5PR98</accession>
<name>NDRG2_DANRE</name>
<sequence length="368" mass="40468">MTTEMQEIAITEEKPLLPGQSDAVKDAEIAARILLDQGQEHTVETPHGVLHVTVHGSGNARRPAILTIHDVGMDSKSCFSTLFRFEEMQEIVKNFTVVHIDAPGQEEGAAVYPAGYQYASMDQVSEMLPAVLQFFNFRTIIGVGVGAGAYILSRFTLNNPEAVEGLVLVNVDPNARGWMDWAAHKLSNLTSSLSDQIISHLFSQQELSANTELIQTHRERITKAPNLLNIELFWKSYLGRRDLSLDRNNTFKCPVMLVVGDQAPYEEAAVECNSKLDPTTTSFLKMADAGGMPQLTQPSKLTEAFKYFIQGMGYMASSCMTRLSRSRTTSLSSSYSMEGSRSRSRTLSQGSQGGQLPPSPSNTMEVSC</sequence>
<protein>
    <recommendedName>
        <fullName>Protein NDRG2</fullName>
    </recommendedName>
</protein>
<reference key="1">
    <citation type="submission" date="2004-12" db="EMBL/GenBank/DDBJ databases">
        <authorList>
            <consortium name="NIH - Zebrafish Gene Collection (ZGC) project"/>
        </authorList>
    </citation>
    <scope>NUCLEOTIDE SEQUENCE [LARGE SCALE MRNA]</scope>
    <source>
        <tissue>Larva</tissue>
    </source>
</reference>
<organism>
    <name type="scientific">Danio rerio</name>
    <name type="common">Zebrafish</name>
    <name type="synonym">Brachydanio rerio</name>
    <dbReference type="NCBI Taxonomy" id="7955"/>
    <lineage>
        <taxon>Eukaryota</taxon>
        <taxon>Metazoa</taxon>
        <taxon>Chordata</taxon>
        <taxon>Craniata</taxon>
        <taxon>Vertebrata</taxon>
        <taxon>Euteleostomi</taxon>
        <taxon>Actinopterygii</taxon>
        <taxon>Neopterygii</taxon>
        <taxon>Teleostei</taxon>
        <taxon>Ostariophysi</taxon>
        <taxon>Cypriniformes</taxon>
        <taxon>Danionidae</taxon>
        <taxon>Danioninae</taxon>
        <taxon>Danio</taxon>
    </lineage>
</organism>
<proteinExistence type="evidence at transcript level"/>
<gene>
    <name type="primary">ndrg2</name>
    <name type="ORF">zgc:101847</name>
</gene>
<keyword id="KW-0963">Cytoplasm</keyword>
<keyword id="KW-0217">Developmental protein</keyword>
<keyword id="KW-0221">Differentiation</keyword>
<keyword id="KW-0524">Neurogenesis</keyword>
<keyword id="KW-1185">Reference proteome</keyword>
<keyword id="KW-0879">Wnt signaling pathway</keyword>
<feature type="chain" id="PRO_0000238967" description="Protein NDRG2">
    <location>
        <begin position="1"/>
        <end position="368"/>
    </location>
</feature>
<feature type="region of interest" description="Disordered" evidence="2">
    <location>
        <begin position="330"/>
        <end position="368"/>
    </location>
</feature>
<feature type="compositionally biased region" description="Low complexity" evidence="2">
    <location>
        <begin position="330"/>
        <end position="339"/>
    </location>
</feature>
<comment type="function">
    <text evidence="1">Contributes to the regulation of the Wnt signaling pathway. Down-regulates CTNNB1-mediated transcriptional activation of target genes. May be involved in neuron differentiation (By similarity).</text>
</comment>
<comment type="subcellular location">
    <subcellularLocation>
        <location evidence="1">Cytoplasm</location>
    </subcellularLocation>
</comment>
<comment type="similarity">
    <text evidence="3">Belongs to the NDRG family.</text>
</comment>
<dbReference type="EMBL" id="BC086746">
    <property type="protein sequence ID" value="AAH86746.1"/>
    <property type="molecule type" value="mRNA"/>
</dbReference>
<dbReference type="RefSeq" id="NP_001008593.1">
    <property type="nucleotide sequence ID" value="NM_001008593.1"/>
</dbReference>
<dbReference type="RefSeq" id="XP_005160437.1">
    <property type="nucleotide sequence ID" value="XM_005160380.5"/>
</dbReference>
<dbReference type="SMR" id="Q5PR98"/>
<dbReference type="FunCoup" id="Q5PR98">
    <property type="interactions" value="765"/>
</dbReference>
<dbReference type="STRING" id="7955.ENSDARP00000012950"/>
<dbReference type="ESTHER" id="danre-ndrg2">
    <property type="family name" value="Ndr_family"/>
</dbReference>
<dbReference type="PaxDb" id="7955-ENSDARP00000012950"/>
<dbReference type="Ensembl" id="ENSDART00000019949">
    <property type="protein sequence ID" value="ENSDARP00000012950"/>
    <property type="gene ID" value="ENSDARG00000011170"/>
</dbReference>
<dbReference type="Ensembl" id="ENSDART00000165021">
    <property type="protein sequence ID" value="ENSDARP00000132699"/>
    <property type="gene ID" value="ENSDARG00000011170"/>
</dbReference>
<dbReference type="GeneID" id="494050"/>
<dbReference type="KEGG" id="dre:494050"/>
<dbReference type="AGR" id="ZFIN:ZDB-GENE-041212-15"/>
<dbReference type="CTD" id="57447"/>
<dbReference type="ZFIN" id="ZDB-GENE-041212-15">
    <property type="gene designation" value="ndrg2"/>
</dbReference>
<dbReference type="eggNOG" id="KOG2931">
    <property type="taxonomic scope" value="Eukaryota"/>
</dbReference>
<dbReference type="HOGENOM" id="CLU_035361_1_0_1"/>
<dbReference type="InParanoid" id="Q5PR98"/>
<dbReference type="OMA" id="KTCFQPL"/>
<dbReference type="OrthoDB" id="741027at2759"/>
<dbReference type="PhylomeDB" id="Q5PR98"/>
<dbReference type="TreeFam" id="TF313168"/>
<dbReference type="PRO" id="PR:Q5PR98"/>
<dbReference type="Proteomes" id="UP000000437">
    <property type="component" value="Chromosome 7"/>
</dbReference>
<dbReference type="Bgee" id="ENSDARG00000011170">
    <property type="expression patterns" value="Expressed in cardiac ventricle and 27 other cell types or tissues"/>
</dbReference>
<dbReference type="GO" id="GO:0005737">
    <property type="term" value="C:cytoplasm"/>
    <property type="evidence" value="ECO:0000318"/>
    <property type="project" value="GO_Central"/>
</dbReference>
<dbReference type="GO" id="GO:0030154">
    <property type="term" value="P:cell differentiation"/>
    <property type="evidence" value="ECO:0007669"/>
    <property type="project" value="UniProtKB-KW"/>
</dbReference>
<dbReference type="GO" id="GO:0007399">
    <property type="term" value="P:nervous system development"/>
    <property type="evidence" value="ECO:0007669"/>
    <property type="project" value="UniProtKB-KW"/>
</dbReference>
<dbReference type="GO" id="GO:0007165">
    <property type="term" value="P:signal transduction"/>
    <property type="evidence" value="ECO:0000318"/>
    <property type="project" value="GO_Central"/>
</dbReference>
<dbReference type="GO" id="GO:0016055">
    <property type="term" value="P:Wnt signaling pathway"/>
    <property type="evidence" value="ECO:0007669"/>
    <property type="project" value="UniProtKB-KW"/>
</dbReference>
<dbReference type="FunFam" id="3.40.50.1820:FF:000034">
    <property type="entry name" value="NDRG2 isoform 1"/>
    <property type="match status" value="1"/>
</dbReference>
<dbReference type="Gene3D" id="3.40.50.1820">
    <property type="entry name" value="alpha/beta hydrolase"/>
    <property type="match status" value="1"/>
</dbReference>
<dbReference type="InterPro" id="IPR029058">
    <property type="entry name" value="AB_hydrolase_fold"/>
</dbReference>
<dbReference type="InterPro" id="IPR004142">
    <property type="entry name" value="NDRG"/>
</dbReference>
<dbReference type="PANTHER" id="PTHR11034">
    <property type="entry name" value="N-MYC DOWNSTREAM REGULATED"/>
    <property type="match status" value="1"/>
</dbReference>
<dbReference type="Pfam" id="PF03096">
    <property type="entry name" value="Ndr"/>
    <property type="match status" value="1"/>
</dbReference>
<dbReference type="SUPFAM" id="SSF53474">
    <property type="entry name" value="alpha/beta-Hydrolases"/>
    <property type="match status" value="1"/>
</dbReference>